<proteinExistence type="inferred from homology"/>
<comment type="subunit">
    <text evidence="1">Homodimer.</text>
</comment>
<comment type="similarity">
    <text evidence="1">Belongs to the UPF0210 family.</text>
</comment>
<feature type="chain" id="PRO_1000139232" description="UPF0210 protein Sez_0396">
    <location>
        <begin position="1"/>
        <end position="445"/>
    </location>
</feature>
<sequence length="445" mass="46154">MDIRQVRETVEMIEEQHFDIRTITMGISLLDCVDSDIDRAAAKIYQKITTKAANLVAVGDDIAAELGIPIVNKRVSVTPIALIGAATDAEDYLPLAKALDQAACDIGVDFIGGFSALVQKGYQKGDKILIESIPQALAQTKKVCASVNVGSTRSGINMTAVADMGRIIKETAKASEMGAAKLVVFANAVEDNPFMAGAFHGVGEADTVINVGVSGPGVVKRALEKVRGESFDVLAETVKKTAFKITRIGQLVGQMASERLGVGFGVVDLSLAPTPAVGDSVARVLEEMGLEMVGTHGTTAALALLNDAVKKGGVMACNRVGGLSGAFIPVSEDEGMIAAVQGGSLNLEKLEAMTAICSVGLDMIAIPEETPSETIAAMIADEAAIGVINQKTTAVRIIPKGKEGDMIAFGGLLGTAPVMAVNPHSSADFIARGGQIPAPIHSFKN</sequence>
<protein>
    <recommendedName>
        <fullName evidence="1">UPF0210 protein Sez_0396</fullName>
    </recommendedName>
</protein>
<evidence type="ECO:0000255" key="1">
    <source>
        <dbReference type="HAMAP-Rule" id="MF_01221"/>
    </source>
</evidence>
<gene>
    <name type="ordered locus">Sez_0396</name>
</gene>
<accession>B4U1A3</accession>
<name>Y396_STREM</name>
<reference key="1">
    <citation type="journal article" date="2008" name="PLoS ONE">
        <title>Genome sequence of a lancefield group C Streptococcus zooepidemicus strain causing epidemic nephritis: new information about an old disease.</title>
        <authorList>
            <person name="Beres S.B."/>
            <person name="Sesso R."/>
            <person name="Pinto S.W.L."/>
            <person name="Hoe N.P."/>
            <person name="Porcella S.F."/>
            <person name="Deleo F.R."/>
            <person name="Musser J.M."/>
        </authorList>
    </citation>
    <scope>NUCLEOTIDE SEQUENCE [LARGE SCALE GENOMIC DNA]</scope>
    <source>
        <strain>MGCS10565</strain>
    </source>
</reference>
<dbReference type="EMBL" id="CP001129">
    <property type="protein sequence ID" value="ACG61770.1"/>
    <property type="molecule type" value="Genomic_DNA"/>
</dbReference>
<dbReference type="RefSeq" id="WP_012515046.1">
    <property type="nucleotide sequence ID" value="NC_011134.1"/>
</dbReference>
<dbReference type="SMR" id="B4U1A3"/>
<dbReference type="KEGG" id="sez:Sez_0396"/>
<dbReference type="HOGENOM" id="CLU_048704_0_0_9"/>
<dbReference type="Proteomes" id="UP000001873">
    <property type="component" value="Chromosome"/>
</dbReference>
<dbReference type="CDD" id="cd08025">
    <property type="entry name" value="RNR_PFL_like_DUF711"/>
    <property type="match status" value="1"/>
</dbReference>
<dbReference type="Gene3D" id="3.20.70.20">
    <property type="match status" value="1"/>
</dbReference>
<dbReference type="HAMAP" id="MF_01221">
    <property type="entry name" value="UPF0210"/>
    <property type="match status" value="1"/>
</dbReference>
<dbReference type="InterPro" id="IPR007841">
    <property type="entry name" value="UPF0210"/>
</dbReference>
<dbReference type="NCBIfam" id="NF003700">
    <property type="entry name" value="PRK05313.1"/>
    <property type="match status" value="1"/>
</dbReference>
<dbReference type="PANTHER" id="PTHR37560:SF1">
    <property type="entry name" value="UPF0210 PROTEIN MJ1665"/>
    <property type="match status" value="1"/>
</dbReference>
<dbReference type="PANTHER" id="PTHR37560">
    <property type="entry name" value="UPF0210 PROTEIN SPR0218"/>
    <property type="match status" value="1"/>
</dbReference>
<dbReference type="Pfam" id="PF05167">
    <property type="entry name" value="DUF711"/>
    <property type="match status" value="1"/>
</dbReference>
<dbReference type="SUPFAM" id="SSF51998">
    <property type="entry name" value="PFL-like glycyl radical enzymes"/>
    <property type="match status" value="1"/>
</dbReference>
<organism>
    <name type="scientific">Streptococcus equi subsp. zooepidemicus (strain MGCS10565)</name>
    <dbReference type="NCBI Taxonomy" id="552526"/>
    <lineage>
        <taxon>Bacteria</taxon>
        <taxon>Bacillati</taxon>
        <taxon>Bacillota</taxon>
        <taxon>Bacilli</taxon>
        <taxon>Lactobacillales</taxon>
        <taxon>Streptococcaceae</taxon>
        <taxon>Streptococcus</taxon>
    </lineage>
</organism>